<proteinExistence type="inferred from homology"/>
<protein>
    <recommendedName>
        <fullName evidence="1">Nucleoprotein</fullName>
    </recommendedName>
    <alternativeName>
        <fullName evidence="1">Nucleocapsid protein</fullName>
        <shortName evidence="1">Protein N</shortName>
    </alternativeName>
</protein>
<reference key="1">
    <citation type="journal article" date="1990" name="J. Virol.">
        <title>Evolution of the nucleoprotein gene of influenza A virus.</title>
        <authorList>
            <person name="Gorman O.T."/>
            <person name="Bean W.J."/>
            <person name="Kawaoka Y."/>
            <person name="Webster R.G."/>
        </authorList>
    </citation>
    <scope>NUCLEOTIDE SEQUENCE [GENOMIC RNA]</scope>
</reference>
<organism>
    <name type="scientific">Influenza A virus (strain A/Gull/Maryland/1824/1978 H13N6)</name>
    <dbReference type="NCBI Taxonomy" id="385602"/>
    <lineage>
        <taxon>Viruses</taxon>
        <taxon>Riboviria</taxon>
        <taxon>Orthornavirae</taxon>
        <taxon>Negarnaviricota</taxon>
        <taxon>Polyploviricotina</taxon>
        <taxon>Insthoviricetes</taxon>
        <taxon>Articulavirales</taxon>
        <taxon>Orthomyxoviridae</taxon>
        <taxon>Alphainfluenzavirus</taxon>
        <taxon>Alphainfluenzavirus influenzae</taxon>
        <taxon>Influenza A virus</taxon>
    </lineage>
</organism>
<organismHost>
    <name type="scientific">Aves</name>
    <dbReference type="NCBI Taxonomy" id="8782"/>
</organismHost>
<feature type="chain" id="PRO_0000079054" description="Nucleoprotein">
    <location>
        <begin position="1"/>
        <end position="498"/>
    </location>
</feature>
<feature type="region of interest" description="Disordered" evidence="2">
    <location>
        <begin position="1"/>
        <end position="22"/>
    </location>
</feature>
<feature type="short sequence motif" description="Unconventional nuclear localization signal" evidence="1">
    <location>
        <begin position="1"/>
        <end position="18"/>
    </location>
</feature>
<feature type="short sequence motif" description="Bipartite nuclear localization signal" evidence="1">
    <location>
        <begin position="198"/>
        <end position="216"/>
    </location>
</feature>
<keyword id="KW-0167">Capsid protein</keyword>
<keyword id="KW-1139">Helical capsid protein</keyword>
<keyword id="KW-1048">Host nucleus</keyword>
<keyword id="KW-0945">Host-virus interaction</keyword>
<keyword id="KW-0687">Ribonucleoprotein</keyword>
<keyword id="KW-0694">RNA-binding</keyword>
<keyword id="KW-0543">Viral nucleoprotein</keyword>
<keyword id="KW-1163">Viral penetration into host nucleus</keyword>
<keyword id="KW-0946">Virion</keyword>
<keyword id="KW-1160">Virus entry into host cell</keyword>
<sequence length="498" mass="56177">MASQGTKRSYEQMETGGERQNANEIRASVGRMVGGIGRFYIQMCTELKLSDNEGRLIQNSITIERMVLSAFDERRNKYLEEHPSTGRDPKKTGGPIYRRRDGKWVRELVLYDKEELRRIWRQANNGEDATAGLTHLMIWHSNLNDATYQRTRALVRTGMDPRMCSLMQGSTLPRRSGAAGAAVKGVGTMVMELIRMIKRGVNDRNFWRGENGRRTRIAYERMCNILKGKFQTAAQRAMMDQVRESRNPGNAEIEDLIFLARSALILRGAVAHKSCLPACVNGLAVASGYDFEREGYSLVGIDPFRLLQNSQVFSLIRPNENPAHKSQLVWMACHSAAFEDLRVSSFIRGTRVLPRGQLSTRGVQIASNENMETMNSSTLELRSKYWAIRTRSGGNTNQQRASAGQVSVQPSFSVQRNLPFERATIMAAFTGNPEGRTSDMRTEIIRMMENSRPEDVSFQGRGVFELSDEKATNPIVPSFDMSNEGSYFFGDNAEEYDN</sequence>
<comment type="function">
    <text evidence="1">Encapsidates the negative strand viral RNA, protecting it from nucleases. The encapsidated genomic RNA is termed the ribonucleoprotein (RNP) and serves as template for transcription and replication. The RNP needs to be localized in the host nucleus to start an infectious cycle, but is too large to diffuse through the nuclear pore complex. NP comprises at least 2 nuclear localization signals that are responsible for the active RNP import into the nucleus through cellular importin alpha/beta pathway. Later in the infection, nclear export of RNPs are mediated through viral proteins NEP interacting with M1 which binds nucleoproteins. It is possible that nucleoprotein binds directly host exportin-1/XPO1 and plays an active role in RNPs nuclear export. M1 interaction with RNP seems to hide nucleoprotein's nuclear localization signals. Soon after a virion infects a new cell, M1 dissociates from the RNP under acidification of the virion driven by M2 protein. Dissociation of M1 from RNP unmasks nucleoprotein's nuclear localization signals, targeting the RNP to the nucleus.</text>
</comment>
<comment type="subunit">
    <text evidence="1">Homomultimerizes to form the nucleocapsid. May bind host exportin-1/XPO1. Binds to viral genomic RNA. Protein-RNA contacts are mediated by a combination of electrostatic interactions between positively charged residues and the phosphate backbone and planar interactions between aromatic side chains and bases.</text>
</comment>
<comment type="subcellular location">
    <subcellularLocation>
        <location evidence="1">Virion</location>
    </subcellularLocation>
    <subcellularLocation>
        <location evidence="1">Host nucleus</location>
    </subcellularLocation>
</comment>
<comment type="PTM">
    <text evidence="1">Late in virus-infected cells, may be cleaved from a 56-kDa protein to a 53-kDa protein by a cellular caspase. This cleavage might be a marker for the onset of apoptosis in infected cells or have a specific function in virus host interaction.</text>
</comment>
<comment type="similarity">
    <text evidence="1">Belongs to the influenza viruses nucleoprotein family.</text>
</comment>
<gene>
    <name evidence="1" type="primary">NP</name>
</gene>
<dbReference type="EMBL" id="M30755">
    <property type="protein sequence ID" value="AAA43463.1"/>
    <property type="molecule type" value="Genomic_RNA"/>
</dbReference>
<dbReference type="SMR" id="P15666"/>
<dbReference type="GO" id="GO:0019029">
    <property type="term" value="C:helical viral capsid"/>
    <property type="evidence" value="ECO:0007669"/>
    <property type="project" value="UniProtKB-UniRule"/>
</dbReference>
<dbReference type="GO" id="GO:0043657">
    <property type="term" value="C:host cell"/>
    <property type="evidence" value="ECO:0007669"/>
    <property type="project" value="GOC"/>
</dbReference>
<dbReference type="GO" id="GO:0042025">
    <property type="term" value="C:host cell nucleus"/>
    <property type="evidence" value="ECO:0007669"/>
    <property type="project" value="UniProtKB-SubCell"/>
</dbReference>
<dbReference type="GO" id="GO:1990904">
    <property type="term" value="C:ribonucleoprotein complex"/>
    <property type="evidence" value="ECO:0007669"/>
    <property type="project" value="UniProtKB-KW"/>
</dbReference>
<dbReference type="GO" id="GO:0019013">
    <property type="term" value="C:viral nucleocapsid"/>
    <property type="evidence" value="ECO:0007669"/>
    <property type="project" value="UniProtKB-UniRule"/>
</dbReference>
<dbReference type="GO" id="GO:0003723">
    <property type="term" value="F:RNA binding"/>
    <property type="evidence" value="ECO:0007669"/>
    <property type="project" value="UniProtKB-UniRule"/>
</dbReference>
<dbReference type="GO" id="GO:0005198">
    <property type="term" value="F:structural molecule activity"/>
    <property type="evidence" value="ECO:0007669"/>
    <property type="project" value="UniProtKB-UniRule"/>
</dbReference>
<dbReference type="GO" id="GO:0046718">
    <property type="term" value="P:symbiont entry into host cell"/>
    <property type="evidence" value="ECO:0007669"/>
    <property type="project" value="UniProtKB-KW"/>
</dbReference>
<dbReference type="GO" id="GO:0075732">
    <property type="term" value="P:viral penetration into host nucleus"/>
    <property type="evidence" value="ECO:0007669"/>
    <property type="project" value="UniProtKB-UniRule"/>
</dbReference>
<dbReference type="HAMAP" id="MF_04070">
    <property type="entry name" value="INFV_NCAP"/>
    <property type="match status" value="1"/>
</dbReference>
<dbReference type="InterPro" id="IPR002141">
    <property type="entry name" value="Flu_NP"/>
</dbReference>
<dbReference type="Pfam" id="PF00506">
    <property type="entry name" value="Flu_NP"/>
    <property type="match status" value="1"/>
</dbReference>
<dbReference type="SUPFAM" id="SSF161003">
    <property type="entry name" value="flu NP-like"/>
    <property type="match status" value="1"/>
</dbReference>
<evidence type="ECO:0000255" key="1">
    <source>
        <dbReference type="HAMAP-Rule" id="MF_04070"/>
    </source>
</evidence>
<evidence type="ECO:0000256" key="2">
    <source>
        <dbReference type="SAM" id="MobiDB-lite"/>
    </source>
</evidence>
<accession>P15666</accession>
<name>NCAP_I78AF</name>